<name>ARGB_EHRCJ</name>
<evidence type="ECO:0000255" key="1">
    <source>
        <dbReference type="HAMAP-Rule" id="MF_00082"/>
    </source>
</evidence>
<keyword id="KW-0028">Amino-acid biosynthesis</keyword>
<keyword id="KW-0055">Arginine biosynthesis</keyword>
<keyword id="KW-0067">ATP-binding</keyword>
<keyword id="KW-0963">Cytoplasm</keyword>
<keyword id="KW-0418">Kinase</keyword>
<keyword id="KW-0547">Nucleotide-binding</keyword>
<keyword id="KW-0808">Transferase</keyword>
<dbReference type="EC" id="2.7.2.8" evidence="1"/>
<dbReference type="EMBL" id="CP000107">
    <property type="protein sequence ID" value="AAZ68484.1"/>
    <property type="molecule type" value="Genomic_DNA"/>
</dbReference>
<dbReference type="RefSeq" id="WP_011304562.1">
    <property type="nucleotide sequence ID" value="NC_007354.1"/>
</dbReference>
<dbReference type="SMR" id="Q3YS21"/>
<dbReference type="FunCoup" id="Q3YS21">
    <property type="interactions" value="63"/>
</dbReference>
<dbReference type="STRING" id="269484.Ecaj_0444"/>
<dbReference type="KEGG" id="ecn:Ecaj_0444"/>
<dbReference type="eggNOG" id="COG0548">
    <property type="taxonomic scope" value="Bacteria"/>
</dbReference>
<dbReference type="HOGENOM" id="CLU_053680_0_0_5"/>
<dbReference type="InParanoid" id="Q3YS21"/>
<dbReference type="UniPathway" id="UPA00068">
    <property type="reaction ID" value="UER00107"/>
</dbReference>
<dbReference type="Proteomes" id="UP000000435">
    <property type="component" value="Chromosome"/>
</dbReference>
<dbReference type="GO" id="GO:0005737">
    <property type="term" value="C:cytoplasm"/>
    <property type="evidence" value="ECO:0007669"/>
    <property type="project" value="UniProtKB-SubCell"/>
</dbReference>
<dbReference type="GO" id="GO:0003991">
    <property type="term" value="F:acetylglutamate kinase activity"/>
    <property type="evidence" value="ECO:0007669"/>
    <property type="project" value="UniProtKB-UniRule"/>
</dbReference>
<dbReference type="GO" id="GO:0005524">
    <property type="term" value="F:ATP binding"/>
    <property type="evidence" value="ECO:0007669"/>
    <property type="project" value="UniProtKB-UniRule"/>
</dbReference>
<dbReference type="GO" id="GO:0042450">
    <property type="term" value="P:arginine biosynthetic process via ornithine"/>
    <property type="evidence" value="ECO:0007669"/>
    <property type="project" value="UniProtKB-UniRule"/>
</dbReference>
<dbReference type="GO" id="GO:0006526">
    <property type="term" value="P:L-arginine biosynthetic process"/>
    <property type="evidence" value="ECO:0007669"/>
    <property type="project" value="UniProtKB-UniPathway"/>
</dbReference>
<dbReference type="CDD" id="cd04250">
    <property type="entry name" value="AAK_NAGK-C"/>
    <property type="match status" value="1"/>
</dbReference>
<dbReference type="FunFam" id="3.40.1160.10:FF:000004">
    <property type="entry name" value="Acetylglutamate kinase"/>
    <property type="match status" value="1"/>
</dbReference>
<dbReference type="Gene3D" id="3.40.1160.10">
    <property type="entry name" value="Acetylglutamate kinase-like"/>
    <property type="match status" value="1"/>
</dbReference>
<dbReference type="HAMAP" id="MF_00082">
    <property type="entry name" value="ArgB"/>
    <property type="match status" value="1"/>
</dbReference>
<dbReference type="InterPro" id="IPR036393">
    <property type="entry name" value="AceGlu_kinase-like_sf"/>
</dbReference>
<dbReference type="InterPro" id="IPR004662">
    <property type="entry name" value="AcgluKinase_fam"/>
</dbReference>
<dbReference type="InterPro" id="IPR037528">
    <property type="entry name" value="ArgB"/>
</dbReference>
<dbReference type="InterPro" id="IPR001048">
    <property type="entry name" value="Asp/Glu/Uridylate_kinase"/>
</dbReference>
<dbReference type="InterPro" id="IPR041727">
    <property type="entry name" value="NAGK-C"/>
</dbReference>
<dbReference type="NCBIfam" id="TIGR00761">
    <property type="entry name" value="argB"/>
    <property type="match status" value="1"/>
</dbReference>
<dbReference type="PANTHER" id="PTHR23342">
    <property type="entry name" value="N-ACETYLGLUTAMATE SYNTHASE"/>
    <property type="match status" value="1"/>
</dbReference>
<dbReference type="PANTHER" id="PTHR23342:SF0">
    <property type="entry name" value="N-ACETYLGLUTAMATE SYNTHASE, MITOCHONDRIAL"/>
    <property type="match status" value="1"/>
</dbReference>
<dbReference type="Pfam" id="PF00696">
    <property type="entry name" value="AA_kinase"/>
    <property type="match status" value="1"/>
</dbReference>
<dbReference type="PIRSF" id="PIRSF000728">
    <property type="entry name" value="NAGK"/>
    <property type="match status" value="1"/>
</dbReference>
<dbReference type="SUPFAM" id="SSF53633">
    <property type="entry name" value="Carbamate kinase-like"/>
    <property type="match status" value="1"/>
</dbReference>
<accession>Q3YS21</accession>
<sequence>MKLHNVLKNNNNNKEDVGPSIEQFGGNAEWFNTTKVLSECLPYIQQFSGETFVIKYGGAAMTDRKLAESFAHDIVLLKQLGINPIVVHGGGNKINSFLEKINKKSTFINGLRVTDAETLEVVEMVLCGLVNKDITQLINKAGGNAIGLCGKDANLIEAKKVCYTYKENQSNNVEKILDMGFVGEPHEVNTDLLFFIEESDFIPVIAPVCSGENNITYNVNADLVAGALANALAAAKLIILTNVSGVTDANGNLLSEISVSDAENLIEQGVANSGMIPKLQTCIKVVKEGYGSAHIIDGRIPHVLLLELFTVHGTGTMVLGNDI</sequence>
<protein>
    <recommendedName>
        <fullName evidence="1">Acetylglutamate kinase</fullName>
        <ecNumber evidence="1">2.7.2.8</ecNumber>
    </recommendedName>
    <alternativeName>
        <fullName evidence="1">N-acetyl-L-glutamate 5-phosphotransferase</fullName>
    </alternativeName>
    <alternativeName>
        <fullName evidence="1">NAG kinase</fullName>
        <shortName evidence="1">NAGK</shortName>
    </alternativeName>
</protein>
<reference key="1">
    <citation type="journal article" date="2006" name="J. Bacteriol.">
        <title>The genome of the obligately intracellular bacterium Ehrlichia canis reveals themes of complex membrane structure and immune evasion strategies.</title>
        <authorList>
            <person name="Mavromatis K."/>
            <person name="Doyle C.K."/>
            <person name="Lykidis A."/>
            <person name="Ivanova N."/>
            <person name="Francino M.P."/>
            <person name="Chain P."/>
            <person name="Shin M."/>
            <person name="Malfatti S."/>
            <person name="Larimer F."/>
            <person name="Copeland A."/>
            <person name="Detter J.C."/>
            <person name="Land M."/>
            <person name="Richardson P.M."/>
            <person name="Yu X.J."/>
            <person name="Walker D.H."/>
            <person name="McBride J.W."/>
            <person name="Kyrpides N.C."/>
        </authorList>
    </citation>
    <scope>NUCLEOTIDE SEQUENCE [LARGE SCALE GENOMIC DNA]</scope>
    <source>
        <strain>Jake</strain>
    </source>
</reference>
<feature type="chain" id="PRO_0000264702" description="Acetylglutamate kinase">
    <location>
        <begin position="1"/>
        <end position="323"/>
    </location>
</feature>
<feature type="binding site" evidence="1">
    <location>
        <begin position="90"/>
        <end position="91"/>
    </location>
    <ligand>
        <name>substrate</name>
    </ligand>
</feature>
<feature type="binding site" evidence="1">
    <location>
        <position position="112"/>
    </location>
    <ligand>
        <name>substrate</name>
    </ligand>
</feature>
<feature type="binding site" evidence="1">
    <location>
        <position position="218"/>
    </location>
    <ligand>
        <name>substrate</name>
    </ligand>
</feature>
<feature type="site" description="Transition state stabilizer" evidence="1">
    <location>
        <position position="55"/>
    </location>
</feature>
<feature type="site" description="Transition state stabilizer" evidence="1">
    <location>
        <position position="278"/>
    </location>
</feature>
<comment type="function">
    <text evidence="1">Catalyzes the ATP-dependent phosphorylation of N-acetyl-L-glutamate.</text>
</comment>
<comment type="catalytic activity">
    <reaction evidence="1">
        <text>N-acetyl-L-glutamate + ATP = N-acetyl-L-glutamyl 5-phosphate + ADP</text>
        <dbReference type="Rhea" id="RHEA:14629"/>
        <dbReference type="ChEBI" id="CHEBI:30616"/>
        <dbReference type="ChEBI" id="CHEBI:44337"/>
        <dbReference type="ChEBI" id="CHEBI:57936"/>
        <dbReference type="ChEBI" id="CHEBI:456216"/>
        <dbReference type="EC" id="2.7.2.8"/>
    </reaction>
</comment>
<comment type="pathway">
    <text evidence="1">Amino-acid biosynthesis; L-arginine biosynthesis; N(2)-acetyl-L-ornithine from L-glutamate: step 2/4.</text>
</comment>
<comment type="subcellular location">
    <subcellularLocation>
        <location evidence="1">Cytoplasm</location>
    </subcellularLocation>
</comment>
<comment type="similarity">
    <text evidence="1">Belongs to the acetylglutamate kinase family. ArgB subfamily.</text>
</comment>
<gene>
    <name evidence="1" type="primary">argB</name>
    <name type="ordered locus">Ecaj_0444</name>
</gene>
<organism>
    <name type="scientific">Ehrlichia canis (strain Jake)</name>
    <dbReference type="NCBI Taxonomy" id="269484"/>
    <lineage>
        <taxon>Bacteria</taxon>
        <taxon>Pseudomonadati</taxon>
        <taxon>Pseudomonadota</taxon>
        <taxon>Alphaproteobacteria</taxon>
        <taxon>Rickettsiales</taxon>
        <taxon>Anaplasmataceae</taxon>
        <taxon>Ehrlichia</taxon>
    </lineage>
</organism>
<proteinExistence type="inferred from homology"/>